<organism>
    <name type="scientific">Enterobacter sp. (strain 638)</name>
    <dbReference type="NCBI Taxonomy" id="399742"/>
    <lineage>
        <taxon>Bacteria</taxon>
        <taxon>Pseudomonadati</taxon>
        <taxon>Pseudomonadota</taxon>
        <taxon>Gammaproteobacteria</taxon>
        <taxon>Enterobacterales</taxon>
        <taxon>Enterobacteriaceae</taxon>
        <taxon>Enterobacter</taxon>
    </lineage>
</organism>
<sequence>MLYKGDTLYVDWLEDGIAELVFDAPGSVNKLDTATVASLGHALDVLEKQSDLKGLLLRSEKAAFIVGADITEFLSLFQVPEEQLSQWLHFANSVFNRLEDLPVPTISAVNGYALGGGCECVLATDYRLATPDLRIGLPETKLGIMPGFGGSVRMPRMLGADSALEIIAAGKDVGADQALKIGLIDGIVKAEKLRDGAISILRQAINGDLDWKAKRQRKLEPLKLSKIEATMSFTIAKGMVMQTAGKHYPAPITAVKTIEAAARLGREEALKLENQSFVPLAHTNEARALVGIFLNDQFVKGKAKQLTKNVEMPKQAAVLGAGIMGGGIAYQSAWKGVPVIMKDINDKSLTLGMTEAAKLLNKQLERGKIDGLKLSGVISTIHPTLEYSGFDRVDVVVEAVVENPKIKKAVLAETEDKVRPDTVLASNTSTIPIGELASVLKRPENFCGMHFFNPVHRMPLVEVIRGEKTSDETIAKVVAWASKMGKTPIVVNDCPGFFVNRVLFPYFAGFSQLLRDGADFRKVDKVMEKQFGWPMGPAYLLDVVGIDTAHHAQAVMAAGFPQRMQKDYRDAIDALFDANRFGQKNGLGFWRYKEDSKGKPKKEDDTAVESLLADVSQPTRDFSDEEIIARMMIPMVNEVVRCLEEGIIASPAEADMALVYGLGFPPFHGGAFRWLDTLGSAKYLDMAQQYQQLGPLYEVPDGLRNKARHNEPYYPPVEPARPVGALKTA</sequence>
<name>FADB_ENT38</name>
<evidence type="ECO:0000255" key="1">
    <source>
        <dbReference type="HAMAP-Rule" id="MF_01621"/>
    </source>
</evidence>
<evidence type="ECO:0000256" key="2">
    <source>
        <dbReference type="SAM" id="MobiDB-lite"/>
    </source>
</evidence>
<keyword id="KW-0276">Fatty acid metabolism</keyword>
<keyword id="KW-0413">Isomerase</keyword>
<keyword id="KW-0442">Lipid degradation</keyword>
<keyword id="KW-0443">Lipid metabolism</keyword>
<keyword id="KW-0456">Lyase</keyword>
<keyword id="KW-0511">Multifunctional enzyme</keyword>
<keyword id="KW-0520">NAD</keyword>
<keyword id="KW-0560">Oxidoreductase</keyword>
<gene>
    <name evidence="1" type="primary">fadB</name>
    <name type="ordered locus">Ent638_3949</name>
</gene>
<reference key="1">
    <citation type="journal article" date="2010" name="PLoS Genet.">
        <title>Genome sequence of the plant growth promoting endophytic bacterium Enterobacter sp. 638.</title>
        <authorList>
            <person name="Taghavi S."/>
            <person name="van der Lelie D."/>
            <person name="Hoffman A."/>
            <person name="Zhang Y.B."/>
            <person name="Walla M.D."/>
            <person name="Vangronsveld J."/>
            <person name="Newman L."/>
            <person name="Monchy S."/>
        </authorList>
    </citation>
    <scope>NUCLEOTIDE SEQUENCE [LARGE SCALE GENOMIC DNA]</scope>
    <source>
        <strain>638</strain>
    </source>
</reference>
<feature type="chain" id="PRO_1000069562" description="Fatty acid oxidation complex subunit alpha">
    <location>
        <begin position="1"/>
        <end position="729"/>
    </location>
</feature>
<feature type="region of interest" description="Enoyl-CoA hydratase/isomerase" evidence="1">
    <location>
        <begin position="1"/>
        <end position="189"/>
    </location>
</feature>
<feature type="region of interest" description="3-hydroxyacyl-CoA dehydrogenase" evidence="1">
    <location>
        <begin position="311"/>
        <end position="729"/>
    </location>
</feature>
<feature type="region of interest" description="Disordered" evidence="2">
    <location>
        <begin position="708"/>
        <end position="729"/>
    </location>
</feature>
<feature type="active site" description="For 3-hydroxyacyl-CoA dehydrogenase activity" evidence="1">
    <location>
        <position position="450"/>
    </location>
</feature>
<feature type="binding site" evidence="1">
    <location>
        <position position="296"/>
    </location>
    <ligand>
        <name>substrate</name>
    </ligand>
</feature>
<feature type="binding site" evidence="1">
    <location>
        <position position="324"/>
    </location>
    <ligand>
        <name>NAD(+)</name>
        <dbReference type="ChEBI" id="CHEBI:57540"/>
    </ligand>
</feature>
<feature type="binding site" evidence="1">
    <location>
        <position position="343"/>
    </location>
    <ligand>
        <name>NAD(+)</name>
        <dbReference type="ChEBI" id="CHEBI:57540"/>
    </ligand>
</feature>
<feature type="binding site" evidence="1">
    <location>
        <begin position="400"/>
        <end position="402"/>
    </location>
    <ligand>
        <name>NAD(+)</name>
        <dbReference type="ChEBI" id="CHEBI:57540"/>
    </ligand>
</feature>
<feature type="binding site" evidence="1">
    <location>
        <position position="407"/>
    </location>
    <ligand>
        <name>NAD(+)</name>
        <dbReference type="ChEBI" id="CHEBI:57540"/>
    </ligand>
</feature>
<feature type="binding site" evidence="1">
    <location>
        <position position="429"/>
    </location>
    <ligand>
        <name>NAD(+)</name>
        <dbReference type="ChEBI" id="CHEBI:57540"/>
    </ligand>
</feature>
<feature type="binding site" evidence="1">
    <location>
        <position position="453"/>
    </location>
    <ligand>
        <name>NAD(+)</name>
        <dbReference type="ChEBI" id="CHEBI:57540"/>
    </ligand>
</feature>
<feature type="binding site" evidence="1">
    <location>
        <position position="500"/>
    </location>
    <ligand>
        <name>substrate</name>
    </ligand>
</feature>
<feature type="binding site" evidence="1">
    <location>
        <position position="660"/>
    </location>
    <ligand>
        <name>substrate</name>
    </ligand>
</feature>
<feature type="site" description="Important for catalytic activity" evidence="1">
    <location>
        <position position="119"/>
    </location>
</feature>
<feature type="site" description="Important for catalytic activity" evidence="1">
    <location>
        <position position="139"/>
    </location>
</feature>
<proteinExistence type="inferred from homology"/>
<comment type="function">
    <text evidence="1">Involved in the aerobic and anaerobic degradation of long-chain fatty acids via beta-oxidation cycle. Catalyzes the formation of 3-oxoacyl-CoA from enoyl-CoA via L-3-hydroxyacyl-CoA. It can also use D-3-hydroxyacyl-CoA and cis-3-enoyl-CoA as substrate.</text>
</comment>
<comment type="catalytic activity">
    <reaction evidence="1">
        <text>a (3S)-3-hydroxyacyl-CoA + NAD(+) = a 3-oxoacyl-CoA + NADH + H(+)</text>
        <dbReference type="Rhea" id="RHEA:22432"/>
        <dbReference type="ChEBI" id="CHEBI:15378"/>
        <dbReference type="ChEBI" id="CHEBI:57318"/>
        <dbReference type="ChEBI" id="CHEBI:57540"/>
        <dbReference type="ChEBI" id="CHEBI:57945"/>
        <dbReference type="ChEBI" id="CHEBI:90726"/>
        <dbReference type="EC" id="1.1.1.35"/>
    </reaction>
</comment>
<comment type="catalytic activity">
    <reaction evidence="1">
        <text>a (3S)-3-hydroxyacyl-CoA = a (2E)-enoyl-CoA + H2O</text>
        <dbReference type="Rhea" id="RHEA:16105"/>
        <dbReference type="ChEBI" id="CHEBI:15377"/>
        <dbReference type="ChEBI" id="CHEBI:57318"/>
        <dbReference type="ChEBI" id="CHEBI:58856"/>
        <dbReference type="EC" id="4.2.1.17"/>
    </reaction>
</comment>
<comment type="catalytic activity">
    <reaction evidence="1">
        <text>a 4-saturated-(3S)-3-hydroxyacyl-CoA = a (3E)-enoyl-CoA + H2O</text>
        <dbReference type="Rhea" id="RHEA:20724"/>
        <dbReference type="ChEBI" id="CHEBI:15377"/>
        <dbReference type="ChEBI" id="CHEBI:58521"/>
        <dbReference type="ChEBI" id="CHEBI:137480"/>
        <dbReference type="EC" id="4.2.1.17"/>
    </reaction>
</comment>
<comment type="catalytic activity">
    <reaction evidence="1">
        <text>(3S)-3-hydroxybutanoyl-CoA = (3R)-3-hydroxybutanoyl-CoA</text>
        <dbReference type="Rhea" id="RHEA:21760"/>
        <dbReference type="ChEBI" id="CHEBI:57315"/>
        <dbReference type="ChEBI" id="CHEBI:57316"/>
        <dbReference type="EC" id="5.1.2.3"/>
    </reaction>
</comment>
<comment type="catalytic activity">
    <reaction evidence="1">
        <text>a (3Z)-enoyl-CoA = a 4-saturated (2E)-enoyl-CoA</text>
        <dbReference type="Rhea" id="RHEA:45900"/>
        <dbReference type="ChEBI" id="CHEBI:85097"/>
        <dbReference type="ChEBI" id="CHEBI:85489"/>
        <dbReference type="EC" id="5.3.3.8"/>
    </reaction>
</comment>
<comment type="catalytic activity">
    <reaction evidence="1">
        <text>a (3E)-enoyl-CoA = a 4-saturated (2E)-enoyl-CoA</text>
        <dbReference type="Rhea" id="RHEA:45228"/>
        <dbReference type="ChEBI" id="CHEBI:58521"/>
        <dbReference type="ChEBI" id="CHEBI:85097"/>
        <dbReference type="EC" id="5.3.3.8"/>
    </reaction>
</comment>
<comment type="pathway">
    <text evidence="1">Lipid metabolism; fatty acid beta-oxidation.</text>
</comment>
<comment type="subunit">
    <text evidence="1">Heterotetramer of two alpha chains (FadB) and two beta chains (FadA).</text>
</comment>
<comment type="similarity">
    <text evidence="1">In the N-terminal section; belongs to the enoyl-CoA hydratase/isomerase family.</text>
</comment>
<comment type="similarity">
    <text evidence="1">In the C-terminal section; belongs to the 3-hydroxyacyl-CoA dehydrogenase family.</text>
</comment>
<dbReference type="EC" id="4.2.1.17" evidence="1"/>
<dbReference type="EC" id="5.1.2.3" evidence="1"/>
<dbReference type="EC" id="5.3.3.8" evidence="1"/>
<dbReference type="EC" id="1.1.1.35" evidence="1"/>
<dbReference type="EMBL" id="CP000653">
    <property type="protein sequence ID" value="ABP62604.1"/>
    <property type="molecule type" value="Genomic_DNA"/>
</dbReference>
<dbReference type="RefSeq" id="WP_015960909.1">
    <property type="nucleotide sequence ID" value="NC_009436.1"/>
</dbReference>
<dbReference type="SMR" id="A4WFX4"/>
<dbReference type="STRING" id="399742.Ent638_3949"/>
<dbReference type="KEGG" id="ent:Ent638_3949"/>
<dbReference type="eggNOG" id="COG1024">
    <property type="taxonomic scope" value="Bacteria"/>
</dbReference>
<dbReference type="eggNOG" id="COG1250">
    <property type="taxonomic scope" value="Bacteria"/>
</dbReference>
<dbReference type="HOGENOM" id="CLU_009834_16_3_6"/>
<dbReference type="OrthoDB" id="5389341at2"/>
<dbReference type="UniPathway" id="UPA00659"/>
<dbReference type="Proteomes" id="UP000000230">
    <property type="component" value="Chromosome"/>
</dbReference>
<dbReference type="GO" id="GO:0036125">
    <property type="term" value="C:fatty acid beta-oxidation multienzyme complex"/>
    <property type="evidence" value="ECO:0007669"/>
    <property type="project" value="InterPro"/>
</dbReference>
<dbReference type="GO" id="GO:0008692">
    <property type="term" value="F:3-hydroxybutyryl-CoA epimerase activity"/>
    <property type="evidence" value="ECO:0007669"/>
    <property type="project" value="UniProtKB-UniRule"/>
</dbReference>
<dbReference type="GO" id="GO:0004165">
    <property type="term" value="F:delta(3)-delta(2)-enoyl-CoA isomerase activity"/>
    <property type="evidence" value="ECO:0007669"/>
    <property type="project" value="UniProtKB-UniRule"/>
</dbReference>
<dbReference type="GO" id="GO:0004300">
    <property type="term" value="F:enoyl-CoA hydratase activity"/>
    <property type="evidence" value="ECO:0007669"/>
    <property type="project" value="UniProtKB-UniRule"/>
</dbReference>
<dbReference type="GO" id="GO:0016509">
    <property type="term" value="F:long-chain-3-hydroxyacyl-CoA dehydrogenase activity"/>
    <property type="evidence" value="ECO:0007669"/>
    <property type="project" value="TreeGrafter"/>
</dbReference>
<dbReference type="GO" id="GO:0070403">
    <property type="term" value="F:NAD+ binding"/>
    <property type="evidence" value="ECO:0007669"/>
    <property type="project" value="InterPro"/>
</dbReference>
<dbReference type="GO" id="GO:0006635">
    <property type="term" value="P:fatty acid beta-oxidation"/>
    <property type="evidence" value="ECO:0007669"/>
    <property type="project" value="UniProtKB-UniRule"/>
</dbReference>
<dbReference type="CDD" id="cd06558">
    <property type="entry name" value="crotonase-like"/>
    <property type="match status" value="1"/>
</dbReference>
<dbReference type="FunFam" id="1.10.1040.50:FF:000001">
    <property type="entry name" value="Fatty acid oxidation complex subunit alpha"/>
    <property type="match status" value="1"/>
</dbReference>
<dbReference type="FunFam" id="3.90.226.10:FF:000018">
    <property type="entry name" value="Fatty acid oxidation complex subunit alpha"/>
    <property type="match status" value="1"/>
</dbReference>
<dbReference type="FunFam" id="3.40.50.720:FF:000009">
    <property type="entry name" value="Fatty oxidation complex, alpha subunit"/>
    <property type="match status" value="1"/>
</dbReference>
<dbReference type="Gene3D" id="1.10.1040.50">
    <property type="match status" value="1"/>
</dbReference>
<dbReference type="Gene3D" id="3.90.226.10">
    <property type="entry name" value="2-enoyl-CoA Hydratase, Chain A, domain 1"/>
    <property type="match status" value="1"/>
</dbReference>
<dbReference type="Gene3D" id="3.40.50.720">
    <property type="entry name" value="NAD(P)-binding Rossmann-like Domain"/>
    <property type="match status" value="1"/>
</dbReference>
<dbReference type="HAMAP" id="MF_01621">
    <property type="entry name" value="FadB"/>
    <property type="match status" value="1"/>
</dbReference>
<dbReference type="InterPro" id="IPR006180">
    <property type="entry name" value="3-OHacyl-CoA_DH_CS"/>
</dbReference>
<dbReference type="InterPro" id="IPR006176">
    <property type="entry name" value="3-OHacyl-CoA_DH_NAD-bd"/>
</dbReference>
<dbReference type="InterPro" id="IPR006108">
    <property type="entry name" value="3HC_DH_C"/>
</dbReference>
<dbReference type="InterPro" id="IPR008927">
    <property type="entry name" value="6-PGluconate_DH-like_C_sf"/>
</dbReference>
<dbReference type="InterPro" id="IPR029045">
    <property type="entry name" value="ClpP/crotonase-like_dom_sf"/>
</dbReference>
<dbReference type="InterPro" id="IPR018376">
    <property type="entry name" value="Enoyl-CoA_hyd/isom_CS"/>
</dbReference>
<dbReference type="InterPro" id="IPR001753">
    <property type="entry name" value="Enoyl-CoA_hydra/iso"/>
</dbReference>
<dbReference type="InterPro" id="IPR050136">
    <property type="entry name" value="FA_oxidation_alpha_subunit"/>
</dbReference>
<dbReference type="InterPro" id="IPR012799">
    <property type="entry name" value="FadB"/>
</dbReference>
<dbReference type="InterPro" id="IPR036291">
    <property type="entry name" value="NAD(P)-bd_dom_sf"/>
</dbReference>
<dbReference type="NCBIfam" id="TIGR02437">
    <property type="entry name" value="FadB"/>
    <property type="match status" value="1"/>
</dbReference>
<dbReference type="NCBIfam" id="NF008727">
    <property type="entry name" value="PRK11730.1"/>
    <property type="match status" value="1"/>
</dbReference>
<dbReference type="PANTHER" id="PTHR43612">
    <property type="entry name" value="TRIFUNCTIONAL ENZYME SUBUNIT ALPHA"/>
    <property type="match status" value="1"/>
</dbReference>
<dbReference type="PANTHER" id="PTHR43612:SF3">
    <property type="entry name" value="TRIFUNCTIONAL ENZYME SUBUNIT ALPHA, MITOCHONDRIAL"/>
    <property type="match status" value="1"/>
</dbReference>
<dbReference type="Pfam" id="PF00725">
    <property type="entry name" value="3HCDH"/>
    <property type="match status" value="2"/>
</dbReference>
<dbReference type="Pfam" id="PF02737">
    <property type="entry name" value="3HCDH_N"/>
    <property type="match status" value="1"/>
</dbReference>
<dbReference type="Pfam" id="PF00378">
    <property type="entry name" value="ECH_1"/>
    <property type="match status" value="1"/>
</dbReference>
<dbReference type="SUPFAM" id="SSF48179">
    <property type="entry name" value="6-phosphogluconate dehydrogenase C-terminal domain-like"/>
    <property type="match status" value="2"/>
</dbReference>
<dbReference type="SUPFAM" id="SSF52096">
    <property type="entry name" value="ClpP/crotonase"/>
    <property type="match status" value="1"/>
</dbReference>
<dbReference type="SUPFAM" id="SSF51735">
    <property type="entry name" value="NAD(P)-binding Rossmann-fold domains"/>
    <property type="match status" value="1"/>
</dbReference>
<dbReference type="PROSITE" id="PS00067">
    <property type="entry name" value="3HCDH"/>
    <property type="match status" value="1"/>
</dbReference>
<dbReference type="PROSITE" id="PS00166">
    <property type="entry name" value="ENOYL_COA_HYDRATASE"/>
    <property type="match status" value="1"/>
</dbReference>
<accession>A4WFX4</accession>
<protein>
    <recommendedName>
        <fullName evidence="1">Fatty acid oxidation complex subunit alpha</fullName>
    </recommendedName>
    <domain>
        <recommendedName>
            <fullName evidence="1">Enoyl-CoA hydratase/Delta(3)-cis-Delta(2)-trans-enoyl-CoA isomerase/3-hydroxybutyryl-CoA epimerase</fullName>
            <ecNumber evidence="1">4.2.1.17</ecNumber>
            <ecNumber evidence="1">5.1.2.3</ecNumber>
            <ecNumber evidence="1">5.3.3.8</ecNumber>
        </recommendedName>
    </domain>
    <domain>
        <recommendedName>
            <fullName evidence="1">3-hydroxyacyl-CoA dehydrogenase</fullName>
            <ecNumber evidence="1">1.1.1.35</ecNumber>
        </recommendedName>
    </domain>
</protein>